<sequence length="241" mass="27825">MQINISNLDVKNHLDKFIEDRLEYEFCKQDKYLYLENDNLKLHYNNKELFIDFNDSEILNRINPKTKKCSVVQAIEGRSKAKLTILDTTAGLGRDTFTLAARGHTLLTLEKDSYLYLLLKDALQRAQQINYLKEIANRITLINIDSNEYILTTDKSFDCVYVDPMFPPRKKSAKVKQGMQILHQVGFNDEVSNSNLLDNIIQTQISPKAVVKRPINAEFLSNKKPSSQLKGKTNRFDIYSL</sequence>
<comment type="function">
    <text evidence="1">Specifically methylates the guanosine in position 1516 of 16S rRNA.</text>
</comment>
<comment type="catalytic activity">
    <reaction evidence="1">
        <text>guanosine(1516) in 16S rRNA + S-adenosyl-L-methionine = N(2)-methylguanosine(1516) in 16S rRNA + S-adenosyl-L-homocysteine + H(+)</text>
        <dbReference type="Rhea" id="RHEA:43220"/>
        <dbReference type="Rhea" id="RHEA-COMP:10412"/>
        <dbReference type="Rhea" id="RHEA-COMP:10413"/>
        <dbReference type="ChEBI" id="CHEBI:15378"/>
        <dbReference type="ChEBI" id="CHEBI:57856"/>
        <dbReference type="ChEBI" id="CHEBI:59789"/>
        <dbReference type="ChEBI" id="CHEBI:74269"/>
        <dbReference type="ChEBI" id="CHEBI:74481"/>
        <dbReference type="EC" id="2.1.1.242"/>
    </reaction>
</comment>
<comment type="subcellular location">
    <subcellularLocation>
        <location evidence="1">Cytoplasm</location>
    </subcellularLocation>
</comment>
<comment type="similarity">
    <text evidence="1">Belongs to the methyltransferase superfamily. RsmJ family.</text>
</comment>
<keyword id="KW-0963">Cytoplasm</keyword>
<keyword id="KW-0489">Methyltransferase</keyword>
<keyword id="KW-1185">Reference proteome</keyword>
<keyword id="KW-0698">rRNA processing</keyword>
<keyword id="KW-0949">S-adenosyl-L-methionine</keyword>
<keyword id="KW-0808">Transferase</keyword>
<proteinExistence type="inferred from homology"/>
<evidence type="ECO:0000255" key="1">
    <source>
        <dbReference type="HAMAP-Rule" id="MF_01523"/>
    </source>
</evidence>
<protein>
    <recommendedName>
        <fullName evidence="1">Ribosomal RNA small subunit methyltransferase J</fullName>
        <ecNumber evidence="1">2.1.1.242</ecNumber>
    </recommendedName>
    <alternativeName>
        <fullName evidence="1">16S rRNA m2G1516 methyltransferase</fullName>
    </alternativeName>
    <alternativeName>
        <fullName evidence="1">rRNA (guanine-N(2)-)-methyltransferase</fullName>
    </alternativeName>
</protein>
<gene>
    <name evidence="1" type="primary">rsmJ</name>
    <name type="ordered locus">FTL_0289</name>
</gene>
<accession>Q2A5B9</accession>
<dbReference type="EC" id="2.1.1.242" evidence="1"/>
<dbReference type="EMBL" id="AM233362">
    <property type="protein sequence ID" value="CAJ78730.1"/>
    <property type="molecule type" value="Genomic_DNA"/>
</dbReference>
<dbReference type="RefSeq" id="WP_003014447.1">
    <property type="nucleotide sequence ID" value="NZ_CP009694.1"/>
</dbReference>
<dbReference type="SMR" id="Q2A5B9"/>
<dbReference type="KEGG" id="ftl:FTL_0289"/>
<dbReference type="Proteomes" id="UP000001944">
    <property type="component" value="Chromosome"/>
</dbReference>
<dbReference type="GO" id="GO:0005737">
    <property type="term" value="C:cytoplasm"/>
    <property type="evidence" value="ECO:0007669"/>
    <property type="project" value="UniProtKB-SubCell"/>
</dbReference>
<dbReference type="GO" id="GO:0008990">
    <property type="term" value="F:rRNA (guanine-N2-)-methyltransferase activity"/>
    <property type="evidence" value="ECO:0007669"/>
    <property type="project" value="UniProtKB-UniRule"/>
</dbReference>
<dbReference type="CDD" id="cd02440">
    <property type="entry name" value="AdoMet_MTases"/>
    <property type="match status" value="1"/>
</dbReference>
<dbReference type="Gene3D" id="3.40.50.150">
    <property type="entry name" value="Vaccinia Virus protein VP39"/>
    <property type="match status" value="1"/>
</dbReference>
<dbReference type="HAMAP" id="MF_01523">
    <property type="entry name" value="16SrRNA_methyltr_J"/>
    <property type="match status" value="1"/>
</dbReference>
<dbReference type="InterPro" id="IPR007536">
    <property type="entry name" value="16SrRNA_methylTrfase_J"/>
</dbReference>
<dbReference type="InterPro" id="IPR029063">
    <property type="entry name" value="SAM-dependent_MTases_sf"/>
</dbReference>
<dbReference type="PANTHER" id="PTHR36112">
    <property type="entry name" value="RIBOSOMAL RNA SMALL SUBUNIT METHYLTRANSFERASE J"/>
    <property type="match status" value="1"/>
</dbReference>
<dbReference type="PANTHER" id="PTHR36112:SF1">
    <property type="entry name" value="RIBOSOMAL RNA SMALL SUBUNIT METHYLTRANSFERASE J"/>
    <property type="match status" value="1"/>
</dbReference>
<dbReference type="Pfam" id="PF04445">
    <property type="entry name" value="SAM_MT"/>
    <property type="match status" value="1"/>
</dbReference>
<dbReference type="SUPFAM" id="SSF53335">
    <property type="entry name" value="S-adenosyl-L-methionine-dependent methyltransferases"/>
    <property type="match status" value="1"/>
</dbReference>
<name>RSMJ_FRATH</name>
<organism>
    <name type="scientific">Francisella tularensis subsp. holarctica (strain LVS)</name>
    <dbReference type="NCBI Taxonomy" id="376619"/>
    <lineage>
        <taxon>Bacteria</taxon>
        <taxon>Pseudomonadati</taxon>
        <taxon>Pseudomonadota</taxon>
        <taxon>Gammaproteobacteria</taxon>
        <taxon>Thiotrichales</taxon>
        <taxon>Francisellaceae</taxon>
        <taxon>Francisella</taxon>
    </lineage>
</organism>
<feature type="chain" id="PRO_0000292630" description="Ribosomal RNA small subunit methyltransferase J">
    <location>
        <begin position="1"/>
        <end position="241"/>
    </location>
</feature>
<feature type="binding site" evidence="1">
    <location>
        <begin position="94"/>
        <end position="95"/>
    </location>
    <ligand>
        <name>S-adenosyl-L-methionine</name>
        <dbReference type="ChEBI" id="CHEBI:59789"/>
    </ligand>
</feature>
<feature type="binding site" evidence="1">
    <location>
        <position position="163"/>
    </location>
    <ligand>
        <name>S-adenosyl-L-methionine</name>
        <dbReference type="ChEBI" id="CHEBI:59789"/>
    </ligand>
</feature>
<reference key="1">
    <citation type="submission" date="2006-03" db="EMBL/GenBank/DDBJ databases">
        <title>Complete genome sequence of Francisella tularensis LVS (Live Vaccine Strain).</title>
        <authorList>
            <person name="Chain P."/>
            <person name="Larimer F."/>
            <person name="Land M."/>
            <person name="Stilwagen S."/>
            <person name="Larsson P."/>
            <person name="Bearden S."/>
            <person name="Chu M."/>
            <person name="Oyston P."/>
            <person name="Forsman M."/>
            <person name="Andersson S."/>
            <person name="Lindler L."/>
            <person name="Titball R."/>
            <person name="Garcia E."/>
        </authorList>
    </citation>
    <scope>NUCLEOTIDE SEQUENCE [LARGE SCALE GENOMIC DNA]</scope>
    <source>
        <strain>LVS</strain>
    </source>
</reference>